<feature type="chain" id="PRO_0000055539" description="Unknown protein CP 10 from 2D-PAGE">
    <location>
        <begin position="1"/>
        <end position="13" status="greater than"/>
    </location>
</feature>
<feature type="non-terminal residue">
    <location>
        <position position="13"/>
    </location>
</feature>
<keyword id="KW-0903">Direct protein sequencing</keyword>
<organism>
    <name type="scientific">Clostridium pasteurianum</name>
    <dbReference type="NCBI Taxonomy" id="1501"/>
    <lineage>
        <taxon>Bacteria</taxon>
        <taxon>Bacillati</taxon>
        <taxon>Bacillota</taxon>
        <taxon>Clostridia</taxon>
        <taxon>Eubacteriales</taxon>
        <taxon>Clostridiaceae</taxon>
        <taxon>Clostridium</taxon>
    </lineage>
</organism>
<accession>P81345</accession>
<proteinExistence type="evidence at protein level"/>
<name>UN10_CLOPA</name>
<comment type="miscellaneous">
    <text>On the 2D-gel the determined pI of this unknown protein is: 5.2, its MW is: 52.5 kDa.</text>
</comment>
<protein>
    <recommendedName>
        <fullName>Unknown protein CP 10 from 2D-PAGE</fullName>
    </recommendedName>
</protein>
<sequence length="13" mass="1448">MQXDIMIFTIGPA</sequence>
<reference key="1">
    <citation type="journal article" date="1998" name="Electrophoresis">
        <title>Two-dimensional gel electrophoresis separation and N-terminal sequence analysis of proteins from Clostridium pasteurianum W5.</title>
        <authorList>
            <person name="Flengsrud R."/>
            <person name="Skjeldal L."/>
        </authorList>
    </citation>
    <scope>PROTEIN SEQUENCE</scope>
    <source>
        <strain>ATCC 6013 / DSM 525 / NCIB 9486 / VKM B-1774 / W5</strain>
    </source>
</reference>